<dbReference type="EMBL" id="BC123681">
    <property type="protein sequence ID" value="AAI23682.1"/>
    <property type="molecule type" value="mRNA"/>
</dbReference>
<dbReference type="RefSeq" id="NP_001070416.1">
    <property type="nucleotide sequence ID" value="NM_001076948.1"/>
</dbReference>
<dbReference type="SMR" id="Q08DL4"/>
<dbReference type="FunCoup" id="Q08DL4">
    <property type="interactions" value="6"/>
</dbReference>
<dbReference type="STRING" id="9913.ENSBTAP00000000049"/>
<dbReference type="PaxDb" id="9913-ENSBTAP00000000049"/>
<dbReference type="GeneID" id="617922"/>
<dbReference type="KEGG" id="bta:617922"/>
<dbReference type="CTD" id="255275"/>
<dbReference type="eggNOG" id="KOG4788">
    <property type="taxonomic scope" value="Eukaryota"/>
</dbReference>
<dbReference type="InParanoid" id="Q08DL4"/>
<dbReference type="OrthoDB" id="8737882at2759"/>
<dbReference type="Proteomes" id="UP000009136">
    <property type="component" value="Unplaced"/>
</dbReference>
<dbReference type="GO" id="GO:0016020">
    <property type="term" value="C:membrane"/>
    <property type="evidence" value="ECO:0007669"/>
    <property type="project" value="UniProtKB-SubCell"/>
</dbReference>
<dbReference type="InterPro" id="IPR008253">
    <property type="entry name" value="Marvel"/>
</dbReference>
<dbReference type="InterPro" id="IPR047123">
    <property type="entry name" value="MYADM-like"/>
</dbReference>
<dbReference type="PANTHER" id="PTHR17068">
    <property type="entry name" value="MYELOID-ASSOCIATED DIFFERENTIATION MARKER MYADM FAMILY MEMBER"/>
    <property type="match status" value="1"/>
</dbReference>
<dbReference type="PANTHER" id="PTHR17068:SF5">
    <property type="entry name" value="MYELOID-ASSOCIATED DIFFERENTIATION MARKER-LIKE PROTEIN 2"/>
    <property type="match status" value="1"/>
</dbReference>
<dbReference type="Pfam" id="PF01284">
    <property type="entry name" value="MARVEL"/>
    <property type="match status" value="2"/>
</dbReference>
<dbReference type="PROSITE" id="PS51225">
    <property type="entry name" value="MARVEL"/>
    <property type="match status" value="2"/>
</dbReference>
<organism>
    <name type="scientific">Bos taurus</name>
    <name type="common">Bovine</name>
    <dbReference type="NCBI Taxonomy" id="9913"/>
    <lineage>
        <taxon>Eukaryota</taxon>
        <taxon>Metazoa</taxon>
        <taxon>Chordata</taxon>
        <taxon>Craniata</taxon>
        <taxon>Vertebrata</taxon>
        <taxon>Euteleostomi</taxon>
        <taxon>Mammalia</taxon>
        <taxon>Eutheria</taxon>
        <taxon>Laurasiatheria</taxon>
        <taxon>Artiodactyla</taxon>
        <taxon>Ruminantia</taxon>
        <taxon>Pecora</taxon>
        <taxon>Bovidae</taxon>
        <taxon>Bovinae</taxon>
        <taxon>Bos</taxon>
    </lineage>
</organism>
<gene>
    <name type="primary">MYADML2</name>
</gene>
<feature type="chain" id="PRO_0000332205" description="Myeloid-associated differentiation marker-like protein 2">
    <location>
        <begin position="1"/>
        <end position="307"/>
    </location>
</feature>
<feature type="transmembrane region" description="Helical" evidence="1">
    <location>
        <begin position="53"/>
        <end position="73"/>
    </location>
</feature>
<feature type="transmembrane region" description="Helical" evidence="1">
    <location>
        <begin position="90"/>
        <end position="110"/>
    </location>
</feature>
<feature type="transmembrane region" description="Helical" evidence="1">
    <location>
        <begin position="129"/>
        <end position="149"/>
    </location>
</feature>
<feature type="transmembrane region" description="Helical" evidence="1">
    <location>
        <begin position="163"/>
        <end position="183"/>
    </location>
</feature>
<feature type="transmembrane region" description="Helical" evidence="1">
    <location>
        <begin position="198"/>
        <end position="218"/>
    </location>
</feature>
<feature type="transmembrane region" description="Helical" evidence="1">
    <location>
        <begin position="232"/>
        <end position="252"/>
    </location>
</feature>
<feature type="transmembrane region" description="Helical" evidence="1">
    <location>
        <begin position="278"/>
        <end position="298"/>
    </location>
</feature>
<feature type="domain" description="MARVEL 1" evidence="2">
    <location>
        <begin position="17"/>
        <end position="154"/>
    </location>
</feature>
<feature type="domain" description="MARVEL 2" evidence="2">
    <location>
        <begin position="159"/>
        <end position="303"/>
    </location>
</feature>
<protein>
    <recommendedName>
        <fullName>Myeloid-associated differentiation marker-like protein 2</fullName>
    </recommendedName>
</protein>
<sequence length="307" mass="33095">MGSTMEPPGGGYLHLGAVTSPVGTARVLQLVFGCTTFSLVAHRGGFSGVQGTFCVAAWGFCFALSVLVVACEFTRLHGCLRLSWGNFTAAFAMLATLLSATAAVIYPLYFTRLECPPEPEGCTARNFRLAASVFAGLLFLAYATEVALTRARPGQVASYMATVSGLLKIVQAFVACIIFGALVHDSRYGRYVATQWCVAVYSLCFLATVVVVILSVLGHTGGLGCPFDRMVVVYTFLAVLLYLSAAVIWPVFCFDPKYGEPGRPPDCPRGSCPWDSQLVVATFTYVNLLLYVADLAYSQRIRFVPTF</sequence>
<name>MADL2_BOVIN</name>
<proteinExistence type="evidence at transcript level"/>
<evidence type="ECO:0000255" key="1"/>
<evidence type="ECO:0000255" key="2">
    <source>
        <dbReference type="PROSITE-ProRule" id="PRU00581"/>
    </source>
</evidence>
<evidence type="ECO:0000305" key="3"/>
<keyword id="KW-0472">Membrane</keyword>
<keyword id="KW-1185">Reference proteome</keyword>
<keyword id="KW-0677">Repeat</keyword>
<keyword id="KW-0812">Transmembrane</keyword>
<keyword id="KW-1133">Transmembrane helix</keyword>
<reference key="1">
    <citation type="submission" date="2006-09" db="EMBL/GenBank/DDBJ databases">
        <authorList>
            <consortium name="NIH - Mammalian Gene Collection (MGC) project"/>
        </authorList>
    </citation>
    <scope>NUCLEOTIDE SEQUENCE [LARGE SCALE MRNA]</scope>
    <source>
        <strain>Hereford</strain>
        <tissue>Fetal muscle</tissue>
    </source>
</reference>
<comment type="subcellular location">
    <subcellularLocation>
        <location evidence="3">Membrane</location>
        <topology evidence="3">Multi-pass membrane protein</topology>
    </subcellularLocation>
</comment>
<comment type="similarity">
    <text evidence="3">Belongs to the MAL family.</text>
</comment>
<accession>Q08DL4</accession>